<evidence type="ECO:0000250" key="1"/>
<evidence type="ECO:0000256" key="2">
    <source>
        <dbReference type="SAM" id="MobiDB-lite"/>
    </source>
</evidence>
<evidence type="ECO:0000269" key="3">
    <source>
    </source>
</evidence>
<evidence type="ECO:0000305" key="4"/>
<proteinExistence type="evidence at transcript level"/>
<comment type="function">
    <text evidence="1">May catalyze the synthesis of indole-3-acetic acid (IAA)-amino acid conjugates, providing a mechanism for the plant to cope with the presence of excess auxin.</text>
</comment>
<comment type="induction">
    <text evidence="3">By auxin.</text>
</comment>
<comment type="similarity">
    <text evidence="4">Belongs to the IAA-amido conjugating enzyme family.</text>
</comment>
<organism>
    <name type="scientific">Oryza sativa subsp. japonica</name>
    <name type="common">Rice</name>
    <dbReference type="NCBI Taxonomy" id="39947"/>
    <lineage>
        <taxon>Eukaryota</taxon>
        <taxon>Viridiplantae</taxon>
        <taxon>Streptophyta</taxon>
        <taxon>Embryophyta</taxon>
        <taxon>Tracheophyta</taxon>
        <taxon>Spermatophyta</taxon>
        <taxon>Magnoliopsida</taxon>
        <taxon>Liliopsida</taxon>
        <taxon>Poales</taxon>
        <taxon>Poaceae</taxon>
        <taxon>BOP clade</taxon>
        <taxon>Oryzoideae</taxon>
        <taxon>Oryzeae</taxon>
        <taxon>Oryzinae</taxon>
        <taxon>Oryza</taxon>
        <taxon>Oryza sativa</taxon>
    </lineage>
</organism>
<sequence>MTSTSSENAPDHDHDHDASSPAPATATAAALPPMIPACDPHDGPACLELIEVLTTRAAAVQRRVLAEVLAMNTGTDYLRRFLGDEVVAAAGGEDELAAAFKERVPVVEYEDVKPYIERIANGAPSSLISSKPITELLTSSGTSGGQPKLMPATEEELDRKTFLYNLLVPVMNKYVEGLDEGRGMYLLFVKPEITTASGMVARPVLTSYYKSRHFRRRPDSPYTRYTSPDAAILCPDSRQSMYAQLLCGLARRGEVLRVGAVFASAFLRAVKFLEGHWRALCADIRAGRADPAVVTDAACRGAVDAVLAARADPDLADAIAAECGGASWRGIVRRLWPRTKYIDVIVTGSMAQYIPLLEFYGGGLPLVSTMYASSESYFGINLRPLDPPEEVVYTLLPNMCYYEFIKVEKDGDGEKVRDGEVVDLVGVEVGAYYELVVTTFTGERVCSPFDFFPTSCMGLSTPSDRKING</sequence>
<accession>Q2R3B4</accession>
<accession>A0A0P0Y2U5</accession>
<keyword id="KW-0436">Ligase</keyword>
<keyword id="KW-1185">Reference proteome</keyword>
<reference key="1">
    <citation type="journal article" date="2005" name="BMC Biol.">
        <title>The sequence of rice chromosomes 11 and 12, rich in disease resistance genes and recent gene duplications.</title>
        <authorList>
            <consortium name="The rice chromosomes 11 and 12 sequencing consortia"/>
        </authorList>
    </citation>
    <scope>NUCLEOTIDE SEQUENCE [LARGE SCALE GENOMIC DNA]</scope>
    <source>
        <strain>cv. Nipponbare</strain>
    </source>
</reference>
<reference key="2">
    <citation type="journal article" date="2005" name="Nature">
        <title>The map-based sequence of the rice genome.</title>
        <authorList>
            <consortium name="International rice genome sequencing project (IRGSP)"/>
        </authorList>
    </citation>
    <scope>NUCLEOTIDE SEQUENCE [LARGE SCALE GENOMIC DNA]</scope>
    <source>
        <strain>cv. Nipponbare</strain>
    </source>
</reference>
<reference key="3">
    <citation type="journal article" date="2008" name="Nucleic Acids Res.">
        <title>The rice annotation project database (RAP-DB): 2008 update.</title>
        <authorList>
            <consortium name="The rice annotation project (RAP)"/>
        </authorList>
    </citation>
    <scope>GENOME REANNOTATION</scope>
    <source>
        <strain>cv. Nipponbare</strain>
    </source>
</reference>
<reference key="4">
    <citation type="journal article" date="2013" name="Rice">
        <title>Improvement of the Oryza sativa Nipponbare reference genome using next generation sequence and optical map data.</title>
        <authorList>
            <person name="Kawahara Y."/>
            <person name="de la Bastide M."/>
            <person name="Hamilton J.P."/>
            <person name="Kanamori H."/>
            <person name="McCombie W.R."/>
            <person name="Ouyang S."/>
            <person name="Schwartz D.C."/>
            <person name="Tanaka T."/>
            <person name="Wu J."/>
            <person name="Zhou S."/>
            <person name="Childs K.L."/>
            <person name="Davidson R.M."/>
            <person name="Lin H."/>
            <person name="Quesada-Ocampo L."/>
            <person name="Vaillancourt B."/>
            <person name="Sakai H."/>
            <person name="Lee S.S."/>
            <person name="Kim J."/>
            <person name="Numa H."/>
            <person name="Itoh T."/>
            <person name="Buell C.R."/>
            <person name="Matsumoto T."/>
        </authorList>
    </citation>
    <scope>GENOME REANNOTATION</scope>
    <source>
        <strain>cv. Nipponbare</strain>
    </source>
</reference>
<reference key="5">
    <citation type="journal article" date="2006" name="Gene">
        <title>The GH3 family in plants: genome wide analysis in rice and evolutionary history based on EST analysis.</title>
        <authorList>
            <person name="Terol J."/>
            <person name="Domingo C."/>
            <person name="Talon M."/>
        </authorList>
    </citation>
    <scope>INDUCTION</scope>
    <scope>GENE FAMILY</scope>
    <scope>NOMENCLATURE</scope>
</reference>
<name>GH313_ORYSJ</name>
<feature type="chain" id="PRO_0000342204" description="Probable indole-3-acetic acid-amido synthetase GH3.13">
    <location>
        <begin position="1"/>
        <end position="469"/>
    </location>
</feature>
<feature type="region of interest" description="Disordered" evidence="2">
    <location>
        <begin position="1"/>
        <end position="26"/>
    </location>
</feature>
<feature type="compositionally biased region" description="Basic and acidic residues" evidence="2">
    <location>
        <begin position="9"/>
        <end position="18"/>
    </location>
</feature>
<protein>
    <recommendedName>
        <fullName>Probable indole-3-acetic acid-amido synthetase GH3.13</fullName>
        <ecNumber>6.3.2.-</ecNumber>
    </recommendedName>
    <alternativeName>
        <fullName>Auxin-responsive GH3-like protein 13</fullName>
        <shortName>OsGH3-13</shortName>
    </alternativeName>
    <alternativeName>
        <fullName>OsGH3-14</fullName>
    </alternativeName>
</protein>
<gene>
    <name type="primary">GH3.13</name>
    <name type="ordered locus">Os11g0528700</name>
    <name type="ordered locus">LOC_Os11g32520</name>
</gene>
<dbReference type="EC" id="6.3.2.-"/>
<dbReference type="EMBL" id="DP000010">
    <property type="protein sequence ID" value="ABA94033.1"/>
    <property type="molecule type" value="Genomic_DNA"/>
</dbReference>
<dbReference type="EMBL" id="AP008217">
    <property type="protein sequence ID" value="BAF28368.1"/>
    <property type="molecule type" value="Genomic_DNA"/>
</dbReference>
<dbReference type="EMBL" id="AP014967">
    <property type="protein sequence ID" value="BAT14267.1"/>
    <property type="molecule type" value="Genomic_DNA"/>
</dbReference>
<dbReference type="SMR" id="Q2R3B4"/>
<dbReference type="FunCoup" id="Q2R3B4">
    <property type="interactions" value="128"/>
</dbReference>
<dbReference type="STRING" id="39947.Q2R3B4"/>
<dbReference type="PaxDb" id="39947-Q2R3B4"/>
<dbReference type="EnsemblPlants" id="Os11t0528700-02">
    <property type="protein sequence ID" value="Os11t0528700-02"/>
    <property type="gene ID" value="Os11g0528700"/>
</dbReference>
<dbReference type="Gramene" id="Os11t0528700-02">
    <property type="protein sequence ID" value="Os11t0528700-02"/>
    <property type="gene ID" value="Os11g0528700"/>
</dbReference>
<dbReference type="KEGG" id="dosa:Os11g0528700"/>
<dbReference type="eggNOG" id="ENOG502QPMU">
    <property type="taxonomic scope" value="Eukaryota"/>
</dbReference>
<dbReference type="HOGENOM" id="CLU_016249_0_2_1"/>
<dbReference type="InParanoid" id="Q2R3B4"/>
<dbReference type="Proteomes" id="UP000000763">
    <property type="component" value="Chromosome 11"/>
</dbReference>
<dbReference type="Proteomes" id="UP000059680">
    <property type="component" value="Chromosome 11"/>
</dbReference>
<dbReference type="ExpressionAtlas" id="Q2R3B4">
    <property type="expression patterns" value="differential"/>
</dbReference>
<dbReference type="GO" id="GO:0005737">
    <property type="term" value="C:cytoplasm"/>
    <property type="evidence" value="ECO:0000318"/>
    <property type="project" value="GO_Central"/>
</dbReference>
<dbReference type="GO" id="GO:0016881">
    <property type="term" value="F:acid-amino acid ligase activity"/>
    <property type="evidence" value="ECO:0000318"/>
    <property type="project" value="GO_Central"/>
</dbReference>
<dbReference type="GO" id="GO:0009733">
    <property type="term" value="P:response to auxin"/>
    <property type="evidence" value="ECO:0000305"/>
    <property type="project" value="Gramene"/>
</dbReference>
<dbReference type="GO" id="GO:0009416">
    <property type="term" value="P:response to light stimulus"/>
    <property type="evidence" value="ECO:0000305"/>
    <property type="project" value="Gramene"/>
</dbReference>
<dbReference type="InterPro" id="IPR004993">
    <property type="entry name" value="GH3"/>
</dbReference>
<dbReference type="InterPro" id="IPR055377">
    <property type="entry name" value="GH3_M"/>
</dbReference>
<dbReference type="PANTHER" id="PTHR31901">
    <property type="entry name" value="GH3 DOMAIN-CONTAINING PROTEIN"/>
    <property type="match status" value="1"/>
</dbReference>
<dbReference type="PANTHER" id="PTHR31901:SF33">
    <property type="entry name" value="INDOLE-3-ACETIC ACID-AMIDO SYNTHETASE GH3.17"/>
    <property type="match status" value="1"/>
</dbReference>
<dbReference type="Pfam" id="PF03321">
    <property type="entry name" value="GH3"/>
    <property type="match status" value="1"/>
</dbReference>
<dbReference type="Pfam" id="PF23571">
    <property type="entry name" value="GH3_M"/>
    <property type="match status" value="1"/>
</dbReference>